<gene>
    <name type="primary">gabarapl1</name>
</gene>
<comment type="function">
    <text evidence="2">Ubiquitin-like modifier that increases cell-surface expression of kappa-type opioid receptor through facilitating anterograde intracellular trafficking of the receptor. Involved in formation of autophagosomal vacuoles. While LC3s are involved in elongation of the phagophore membrane, the GABARAP/GATE-16 subfamily is essential for a later stage in autophagosome maturation.</text>
</comment>
<comment type="subcellular location">
    <subcellularLocation>
        <location evidence="2">Cytoplasmic vesicle</location>
        <location evidence="2">Autophagosome</location>
    </subcellularLocation>
    <subcellularLocation>
        <location evidence="2">Cytoplasmic vesicle membrane</location>
        <topology evidence="2">Lipid-anchor</topology>
    </subcellularLocation>
    <subcellularLocation>
        <location evidence="1">Cytoplasm</location>
        <location evidence="1">Cytoskeleton</location>
    </subcellularLocation>
    <subcellularLocation>
        <location evidence="1">Endoplasmic reticulum</location>
    </subcellularLocation>
    <subcellularLocation>
        <location evidence="1">Golgi apparatus</location>
    </subcellularLocation>
</comment>
<comment type="PTM">
    <text evidence="2">The precursor molecule is cleaved by ATG4 (atg4a, atg4b, atg4c or atg4d) to expose the glycine at the C-terminus and form the cytosolic form, gabarapl1-I. The processed form is then activated by apg7l/atg7, transferred to atg3 and conjugated to phosphatidylethanolamine (PE) phospholipid to form the membrane-bound form, gabarapl1-II. During non-canonical autophagy, the processed form is conjugated to phosphatidylserine (PS) phospholipid. Atg4 proteins also mediate the delipidation of PE-conjugated forms required for gabarapl1 recycling when autophagosomes fuse with lysosomes. In addition, some atg4 proteins mediate delipidation of ATG8 proteins conjugated to PS during non-canonical autophagy.</text>
</comment>
<comment type="similarity">
    <text evidence="3">Belongs to the ATG8 family.</text>
</comment>
<name>GBRL1_XENLA</name>
<feature type="chain" id="PRO_0000438280" description="Gamma-aminobutyric acid receptor-associated protein-like 1">
    <location>
        <begin position="1"/>
        <end position="116"/>
    </location>
</feature>
<feature type="propeptide" id="PRO_0000342411" description="Removed in mature form">
    <location>
        <position position="117"/>
    </location>
</feature>
<feature type="site" description="Cleavage; by ATG4B" evidence="2">
    <location>
        <begin position="116"/>
        <end position="117"/>
    </location>
</feature>
<feature type="lipid moiety-binding region" description="Phosphatidylethanolamine amidated glycine" evidence="2">
    <location>
        <position position="116"/>
    </location>
</feature>
<feature type="lipid moiety-binding region" description="Phosphatidylserine amidated glycine; alternate" evidence="2">
    <location>
        <position position="116"/>
    </location>
</feature>
<keyword id="KW-0072">Autophagy</keyword>
<keyword id="KW-0963">Cytoplasm</keyword>
<keyword id="KW-0968">Cytoplasmic vesicle</keyword>
<keyword id="KW-0206">Cytoskeleton</keyword>
<keyword id="KW-0256">Endoplasmic reticulum</keyword>
<keyword id="KW-0333">Golgi apparatus</keyword>
<keyword id="KW-0449">Lipoprotein</keyword>
<keyword id="KW-0472">Membrane</keyword>
<keyword id="KW-0493">Microtubule</keyword>
<keyword id="KW-1185">Reference proteome</keyword>
<dbReference type="EMBL" id="BC072921">
    <property type="protein sequence ID" value="AAH72921.1"/>
    <property type="molecule type" value="mRNA"/>
</dbReference>
<dbReference type="EMBL" id="BC082864">
    <property type="protein sequence ID" value="AAH82864.1"/>
    <property type="molecule type" value="mRNA"/>
</dbReference>
<dbReference type="RefSeq" id="NP_001085553.1">
    <property type="nucleotide sequence ID" value="NM_001092084.1"/>
</dbReference>
<dbReference type="RefSeq" id="NP_001088067.1">
    <property type="nucleotide sequence ID" value="NM_001094598.1"/>
</dbReference>
<dbReference type="BMRB" id="Q6GQ27"/>
<dbReference type="SMR" id="Q6GQ27"/>
<dbReference type="DNASU" id="443979"/>
<dbReference type="GeneID" id="443979"/>
<dbReference type="KEGG" id="xla:443979"/>
<dbReference type="CTD" id="443979"/>
<dbReference type="OMA" id="KNQIRAK"/>
<dbReference type="OrthoDB" id="6738456at2759"/>
<dbReference type="Proteomes" id="UP000186698">
    <property type="component" value="Chromosome 7S"/>
</dbReference>
<dbReference type="Bgee" id="443979">
    <property type="expression patterns" value="Expressed in brain and 17 other cell types or tissues"/>
</dbReference>
<dbReference type="GO" id="GO:0000421">
    <property type="term" value="C:autophagosome membrane"/>
    <property type="evidence" value="ECO:0000318"/>
    <property type="project" value="GO_Central"/>
</dbReference>
<dbReference type="GO" id="GO:0030659">
    <property type="term" value="C:cytoplasmic vesicle membrane"/>
    <property type="evidence" value="ECO:0007669"/>
    <property type="project" value="UniProtKB-SubCell"/>
</dbReference>
<dbReference type="GO" id="GO:0005783">
    <property type="term" value="C:endoplasmic reticulum"/>
    <property type="evidence" value="ECO:0007669"/>
    <property type="project" value="UniProtKB-SubCell"/>
</dbReference>
<dbReference type="GO" id="GO:0005794">
    <property type="term" value="C:Golgi apparatus"/>
    <property type="evidence" value="ECO:0007669"/>
    <property type="project" value="UniProtKB-SubCell"/>
</dbReference>
<dbReference type="GO" id="GO:0005874">
    <property type="term" value="C:microtubule"/>
    <property type="evidence" value="ECO:0007669"/>
    <property type="project" value="UniProtKB-KW"/>
</dbReference>
<dbReference type="GO" id="GO:0050811">
    <property type="term" value="F:GABA receptor binding"/>
    <property type="evidence" value="ECO:0000318"/>
    <property type="project" value="GO_Central"/>
</dbReference>
<dbReference type="GO" id="GO:0008429">
    <property type="term" value="F:phosphatidylethanolamine binding"/>
    <property type="evidence" value="ECO:0000318"/>
    <property type="project" value="GO_Central"/>
</dbReference>
<dbReference type="GO" id="GO:0031625">
    <property type="term" value="F:ubiquitin protein ligase binding"/>
    <property type="evidence" value="ECO:0000318"/>
    <property type="project" value="GO_Central"/>
</dbReference>
<dbReference type="GO" id="GO:0000045">
    <property type="term" value="P:autophagosome assembly"/>
    <property type="evidence" value="ECO:0000318"/>
    <property type="project" value="GO_Central"/>
</dbReference>
<dbReference type="GO" id="GO:0097352">
    <property type="term" value="P:autophagosome maturation"/>
    <property type="evidence" value="ECO:0000318"/>
    <property type="project" value="GO_Central"/>
</dbReference>
<dbReference type="GO" id="GO:0006995">
    <property type="term" value="P:cellular response to nitrogen starvation"/>
    <property type="evidence" value="ECO:0000318"/>
    <property type="project" value="GO_Central"/>
</dbReference>
<dbReference type="GO" id="GO:0000423">
    <property type="term" value="P:mitophagy"/>
    <property type="evidence" value="ECO:0000318"/>
    <property type="project" value="GO_Central"/>
</dbReference>
<dbReference type="CDD" id="cd16127">
    <property type="entry name" value="Ubl_ATG8_GABARAP_like"/>
    <property type="match status" value="1"/>
</dbReference>
<dbReference type="FunFam" id="3.10.20.90:FF:000037">
    <property type="entry name" value="Gamma-aminobutyric acid receptor-associated protein-like 1"/>
    <property type="match status" value="1"/>
</dbReference>
<dbReference type="Gene3D" id="3.10.20.90">
    <property type="entry name" value="Phosphatidylinositol 3-kinase Catalytic Subunit, Chain A, domain 1"/>
    <property type="match status" value="1"/>
</dbReference>
<dbReference type="InterPro" id="IPR004241">
    <property type="entry name" value="Atg8-like"/>
</dbReference>
<dbReference type="InterPro" id="IPR029071">
    <property type="entry name" value="Ubiquitin-like_domsf"/>
</dbReference>
<dbReference type="PANTHER" id="PTHR10969">
    <property type="entry name" value="MICROTUBULE-ASSOCIATED PROTEINS 1A/1B LIGHT CHAIN 3-RELATED"/>
    <property type="match status" value="1"/>
</dbReference>
<dbReference type="Pfam" id="PF02991">
    <property type="entry name" value="ATG8"/>
    <property type="match status" value="1"/>
</dbReference>
<dbReference type="SUPFAM" id="SSF54236">
    <property type="entry name" value="Ubiquitin-like"/>
    <property type="match status" value="1"/>
</dbReference>
<protein>
    <recommendedName>
        <fullName>Gamma-aminobutyric acid receptor-associated protein-like 1</fullName>
    </recommendedName>
    <alternativeName>
        <fullName>GABA(A) receptor-associated protein-like 1</fullName>
    </alternativeName>
</protein>
<accession>Q6GQ27</accession>
<reference key="1">
    <citation type="submission" date="2004-09" db="EMBL/GenBank/DDBJ databases">
        <authorList>
            <consortium name="NIH - Xenopus Gene Collection (XGC) project"/>
        </authorList>
    </citation>
    <scope>NUCLEOTIDE SEQUENCE [LARGE SCALE MRNA]</scope>
    <source>
        <tissue>Kidney</tissue>
        <tissue>Liver</tissue>
    </source>
</reference>
<organism>
    <name type="scientific">Xenopus laevis</name>
    <name type="common">African clawed frog</name>
    <dbReference type="NCBI Taxonomy" id="8355"/>
    <lineage>
        <taxon>Eukaryota</taxon>
        <taxon>Metazoa</taxon>
        <taxon>Chordata</taxon>
        <taxon>Craniata</taxon>
        <taxon>Vertebrata</taxon>
        <taxon>Euteleostomi</taxon>
        <taxon>Amphibia</taxon>
        <taxon>Batrachia</taxon>
        <taxon>Anura</taxon>
        <taxon>Pipoidea</taxon>
        <taxon>Pipidae</taxon>
        <taxon>Xenopodinae</taxon>
        <taxon>Xenopus</taxon>
        <taxon>Xenopus</taxon>
    </lineage>
</organism>
<proteinExistence type="inferred from homology"/>
<sequence length="117" mass="14044">MKFQYKEDHPFEYRKKEGEKIRKKYPDRVPVIVEKAPKARVPDLDKRKYLVPSDLTVGQFYFLIRKRIHLRPEDALFFFVNNTIPPTSATMGQLYEDNHEEDYFLYVAYSDESVYGK</sequence>
<evidence type="ECO:0000250" key="1">
    <source>
        <dbReference type="UniProtKB" id="Q0VGK0"/>
    </source>
</evidence>
<evidence type="ECO:0000250" key="2">
    <source>
        <dbReference type="UniProtKB" id="Q9H0R8"/>
    </source>
</evidence>
<evidence type="ECO:0000305" key="3"/>